<name>FPG_XANE5</name>
<dbReference type="EC" id="3.2.2.23" evidence="2"/>
<dbReference type="EC" id="4.2.99.18" evidence="2"/>
<dbReference type="EMBL" id="AM039952">
    <property type="protein sequence ID" value="CAJ26121.1"/>
    <property type="status" value="ALT_INIT"/>
    <property type="molecule type" value="Genomic_DNA"/>
</dbReference>
<dbReference type="RefSeq" id="WP_008571924.1">
    <property type="nucleotide sequence ID" value="NZ_CP017190.1"/>
</dbReference>
<dbReference type="SMR" id="Q3BM92"/>
<dbReference type="STRING" id="456327.BJD11_23465"/>
<dbReference type="GeneID" id="97512423"/>
<dbReference type="KEGG" id="xcv:XCV4390"/>
<dbReference type="eggNOG" id="COG0266">
    <property type="taxonomic scope" value="Bacteria"/>
</dbReference>
<dbReference type="HOGENOM" id="CLU_038423_1_1_6"/>
<dbReference type="Proteomes" id="UP000007069">
    <property type="component" value="Chromosome"/>
</dbReference>
<dbReference type="GO" id="GO:0034039">
    <property type="term" value="F:8-oxo-7,8-dihydroguanine DNA N-glycosylase activity"/>
    <property type="evidence" value="ECO:0007669"/>
    <property type="project" value="TreeGrafter"/>
</dbReference>
<dbReference type="GO" id="GO:0140078">
    <property type="term" value="F:class I DNA-(apurinic or apyrimidinic site) endonuclease activity"/>
    <property type="evidence" value="ECO:0007669"/>
    <property type="project" value="UniProtKB-EC"/>
</dbReference>
<dbReference type="GO" id="GO:0003684">
    <property type="term" value="F:damaged DNA binding"/>
    <property type="evidence" value="ECO:0007669"/>
    <property type="project" value="InterPro"/>
</dbReference>
<dbReference type="GO" id="GO:0008270">
    <property type="term" value="F:zinc ion binding"/>
    <property type="evidence" value="ECO:0007669"/>
    <property type="project" value="UniProtKB-UniRule"/>
</dbReference>
<dbReference type="GO" id="GO:0006284">
    <property type="term" value="P:base-excision repair"/>
    <property type="evidence" value="ECO:0007669"/>
    <property type="project" value="InterPro"/>
</dbReference>
<dbReference type="CDD" id="cd08966">
    <property type="entry name" value="EcFpg-like_N"/>
    <property type="match status" value="1"/>
</dbReference>
<dbReference type="FunFam" id="1.10.8.50:FF:000003">
    <property type="entry name" value="Formamidopyrimidine-DNA glycosylase"/>
    <property type="match status" value="1"/>
</dbReference>
<dbReference type="FunFam" id="3.20.190.10:FF:000001">
    <property type="entry name" value="Formamidopyrimidine-DNA glycosylase"/>
    <property type="match status" value="1"/>
</dbReference>
<dbReference type="Gene3D" id="1.10.8.50">
    <property type="match status" value="1"/>
</dbReference>
<dbReference type="Gene3D" id="3.20.190.10">
    <property type="entry name" value="MutM-like, N-terminal"/>
    <property type="match status" value="1"/>
</dbReference>
<dbReference type="HAMAP" id="MF_00103">
    <property type="entry name" value="Fapy_DNA_glycosyl"/>
    <property type="match status" value="1"/>
</dbReference>
<dbReference type="InterPro" id="IPR015886">
    <property type="entry name" value="DNA_glyclase/AP_lyase_DNA-bd"/>
</dbReference>
<dbReference type="InterPro" id="IPR015887">
    <property type="entry name" value="DNA_glyclase_Znf_dom_DNA_BS"/>
</dbReference>
<dbReference type="InterPro" id="IPR020629">
    <property type="entry name" value="Formamido-pyr_DNA_Glyclase"/>
</dbReference>
<dbReference type="InterPro" id="IPR012319">
    <property type="entry name" value="FPG_cat"/>
</dbReference>
<dbReference type="InterPro" id="IPR035937">
    <property type="entry name" value="MutM-like_N-ter"/>
</dbReference>
<dbReference type="InterPro" id="IPR010979">
    <property type="entry name" value="Ribosomal_uS13-like_H2TH"/>
</dbReference>
<dbReference type="InterPro" id="IPR000214">
    <property type="entry name" value="Znf_DNA_glyclase/AP_lyase"/>
</dbReference>
<dbReference type="InterPro" id="IPR010663">
    <property type="entry name" value="Znf_FPG/IleRS"/>
</dbReference>
<dbReference type="NCBIfam" id="TIGR00577">
    <property type="entry name" value="fpg"/>
    <property type="match status" value="1"/>
</dbReference>
<dbReference type="NCBIfam" id="NF002211">
    <property type="entry name" value="PRK01103.1"/>
    <property type="match status" value="1"/>
</dbReference>
<dbReference type="PANTHER" id="PTHR22993">
    <property type="entry name" value="FORMAMIDOPYRIMIDINE-DNA GLYCOSYLASE"/>
    <property type="match status" value="1"/>
</dbReference>
<dbReference type="PANTHER" id="PTHR22993:SF9">
    <property type="entry name" value="FORMAMIDOPYRIMIDINE-DNA GLYCOSYLASE"/>
    <property type="match status" value="1"/>
</dbReference>
<dbReference type="Pfam" id="PF01149">
    <property type="entry name" value="Fapy_DNA_glyco"/>
    <property type="match status" value="1"/>
</dbReference>
<dbReference type="Pfam" id="PF06831">
    <property type="entry name" value="H2TH"/>
    <property type="match status" value="1"/>
</dbReference>
<dbReference type="Pfam" id="PF06827">
    <property type="entry name" value="zf-FPG_IleRS"/>
    <property type="match status" value="1"/>
</dbReference>
<dbReference type="SMART" id="SM00898">
    <property type="entry name" value="Fapy_DNA_glyco"/>
    <property type="match status" value="1"/>
</dbReference>
<dbReference type="SMART" id="SM01232">
    <property type="entry name" value="H2TH"/>
    <property type="match status" value="1"/>
</dbReference>
<dbReference type="SUPFAM" id="SSF57716">
    <property type="entry name" value="Glucocorticoid receptor-like (DNA-binding domain)"/>
    <property type="match status" value="1"/>
</dbReference>
<dbReference type="SUPFAM" id="SSF81624">
    <property type="entry name" value="N-terminal domain of MutM-like DNA repair proteins"/>
    <property type="match status" value="1"/>
</dbReference>
<dbReference type="SUPFAM" id="SSF46946">
    <property type="entry name" value="S13-like H2TH domain"/>
    <property type="match status" value="1"/>
</dbReference>
<dbReference type="PROSITE" id="PS51068">
    <property type="entry name" value="FPG_CAT"/>
    <property type="match status" value="1"/>
</dbReference>
<dbReference type="PROSITE" id="PS01242">
    <property type="entry name" value="ZF_FPG_1"/>
    <property type="match status" value="1"/>
</dbReference>
<dbReference type="PROSITE" id="PS51066">
    <property type="entry name" value="ZF_FPG_2"/>
    <property type="match status" value="1"/>
</dbReference>
<organism>
    <name type="scientific">Xanthomonas euvesicatoria pv. vesicatoria (strain 85-10)</name>
    <name type="common">Xanthomonas campestris pv. vesicatoria</name>
    <dbReference type="NCBI Taxonomy" id="316273"/>
    <lineage>
        <taxon>Bacteria</taxon>
        <taxon>Pseudomonadati</taxon>
        <taxon>Pseudomonadota</taxon>
        <taxon>Gammaproteobacteria</taxon>
        <taxon>Lysobacterales</taxon>
        <taxon>Lysobacteraceae</taxon>
        <taxon>Xanthomonas</taxon>
    </lineage>
</organism>
<gene>
    <name evidence="2" type="primary">mutM</name>
    <name evidence="2" type="synonym">fpg</name>
    <name type="ordered locus">XCV4390</name>
</gene>
<accession>Q3BM92</accession>
<comment type="function">
    <text evidence="2">Involved in base excision repair of DNA damaged by oxidation or by mutagenic agents. Acts as a DNA glycosylase that recognizes and removes damaged bases. Has a preference for oxidized purines, such as 7,8-dihydro-8-oxoguanine (8-oxoG). Has AP (apurinic/apyrimidinic) lyase activity and introduces nicks in the DNA strand. Cleaves the DNA backbone by beta-delta elimination to generate a single-strand break at the site of the removed base with both 3'- and 5'-phosphates.</text>
</comment>
<comment type="catalytic activity">
    <reaction evidence="2">
        <text>Hydrolysis of DNA containing ring-opened 7-methylguanine residues, releasing 2,6-diamino-4-hydroxy-5-(N-methyl)formamidopyrimidine.</text>
        <dbReference type="EC" id="3.2.2.23"/>
    </reaction>
</comment>
<comment type="catalytic activity">
    <reaction evidence="2">
        <text>2'-deoxyribonucleotide-(2'-deoxyribose 5'-phosphate)-2'-deoxyribonucleotide-DNA = a 3'-end 2'-deoxyribonucleotide-(2,3-dehydro-2,3-deoxyribose 5'-phosphate)-DNA + a 5'-end 5'-phospho-2'-deoxyribonucleoside-DNA + H(+)</text>
        <dbReference type="Rhea" id="RHEA:66592"/>
        <dbReference type="Rhea" id="RHEA-COMP:13180"/>
        <dbReference type="Rhea" id="RHEA-COMP:16897"/>
        <dbReference type="Rhea" id="RHEA-COMP:17067"/>
        <dbReference type="ChEBI" id="CHEBI:15378"/>
        <dbReference type="ChEBI" id="CHEBI:136412"/>
        <dbReference type="ChEBI" id="CHEBI:157695"/>
        <dbReference type="ChEBI" id="CHEBI:167181"/>
        <dbReference type="EC" id="4.2.99.18"/>
    </reaction>
</comment>
<comment type="cofactor">
    <cofactor evidence="2">
        <name>Zn(2+)</name>
        <dbReference type="ChEBI" id="CHEBI:29105"/>
    </cofactor>
    <text evidence="2">Binds 1 zinc ion per subunit.</text>
</comment>
<comment type="subunit">
    <text evidence="2">Monomer.</text>
</comment>
<comment type="similarity">
    <text evidence="2">Belongs to the FPG family.</text>
</comment>
<comment type="sequence caution" evidence="3">
    <conflict type="erroneous initiation">
        <sequence resource="EMBL-CDS" id="CAJ26121"/>
    </conflict>
</comment>
<proteinExistence type="inferred from homology"/>
<protein>
    <recommendedName>
        <fullName evidence="2">Formamidopyrimidine-DNA glycosylase</fullName>
        <shortName evidence="2">Fapy-DNA glycosylase</shortName>
        <ecNumber evidence="2">3.2.2.23</ecNumber>
    </recommendedName>
    <alternativeName>
        <fullName evidence="2">DNA-(apurinic or apyrimidinic site) lyase MutM</fullName>
        <shortName evidence="2">AP lyase MutM</shortName>
        <ecNumber evidence="2">4.2.99.18</ecNumber>
    </alternativeName>
</protein>
<feature type="initiator methionine" description="Removed" evidence="1">
    <location>
        <position position="1"/>
    </location>
</feature>
<feature type="chain" id="PRO_0000228485" description="Formamidopyrimidine-DNA glycosylase">
    <location>
        <begin position="2"/>
        <end position="271"/>
    </location>
</feature>
<feature type="zinc finger region" description="FPG-type" evidence="2">
    <location>
        <begin position="237"/>
        <end position="271"/>
    </location>
</feature>
<feature type="active site" description="Schiff-base intermediate with DNA" evidence="2">
    <location>
        <position position="2"/>
    </location>
</feature>
<feature type="active site" description="Proton donor" evidence="2">
    <location>
        <position position="3"/>
    </location>
</feature>
<feature type="active site" description="Proton donor; for beta-elimination activity" evidence="2">
    <location>
        <position position="58"/>
    </location>
</feature>
<feature type="active site" description="Proton donor; for delta-elimination activity" evidence="2">
    <location>
        <position position="261"/>
    </location>
</feature>
<feature type="binding site" evidence="2">
    <location>
        <position position="92"/>
    </location>
    <ligand>
        <name>DNA</name>
        <dbReference type="ChEBI" id="CHEBI:16991"/>
    </ligand>
</feature>
<feature type="binding site" evidence="2">
    <location>
        <position position="111"/>
    </location>
    <ligand>
        <name>DNA</name>
        <dbReference type="ChEBI" id="CHEBI:16991"/>
    </ligand>
</feature>
<feature type="binding site" evidence="2">
    <location>
        <position position="152"/>
    </location>
    <ligand>
        <name>DNA</name>
        <dbReference type="ChEBI" id="CHEBI:16991"/>
    </ligand>
</feature>
<keyword id="KW-0227">DNA damage</keyword>
<keyword id="KW-0234">DNA repair</keyword>
<keyword id="KW-0238">DNA-binding</keyword>
<keyword id="KW-0326">Glycosidase</keyword>
<keyword id="KW-0378">Hydrolase</keyword>
<keyword id="KW-0456">Lyase</keyword>
<keyword id="KW-0479">Metal-binding</keyword>
<keyword id="KW-0511">Multifunctional enzyme</keyword>
<keyword id="KW-0862">Zinc</keyword>
<keyword id="KW-0863">Zinc-finger</keyword>
<reference key="1">
    <citation type="journal article" date="2005" name="J. Bacteriol.">
        <title>Insights into genome plasticity and pathogenicity of the plant pathogenic Bacterium Xanthomonas campestris pv. vesicatoria revealed by the complete genome sequence.</title>
        <authorList>
            <person name="Thieme F."/>
            <person name="Koebnik R."/>
            <person name="Bekel T."/>
            <person name="Berger C."/>
            <person name="Boch J."/>
            <person name="Buettner D."/>
            <person name="Caldana C."/>
            <person name="Gaigalat L."/>
            <person name="Goesmann A."/>
            <person name="Kay S."/>
            <person name="Kirchner O."/>
            <person name="Lanz C."/>
            <person name="Linke B."/>
            <person name="McHardy A.C."/>
            <person name="Meyer F."/>
            <person name="Mittenhuber G."/>
            <person name="Nies D.H."/>
            <person name="Niesbach-Kloesgen U."/>
            <person name="Patschkowski T."/>
            <person name="Rueckert C."/>
            <person name="Rupp O."/>
            <person name="Schneiker S."/>
            <person name="Schuster S.C."/>
            <person name="Vorhoelter F.J."/>
            <person name="Weber E."/>
            <person name="Puehler A."/>
            <person name="Bonas U."/>
            <person name="Bartels D."/>
            <person name="Kaiser O."/>
        </authorList>
    </citation>
    <scope>NUCLEOTIDE SEQUENCE [LARGE SCALE GENOMIC DNA]</scope>
    <source>
        <strain>85-10</strain>
    </source>
</reference>
<evidence type="ECO:0000250" key="1"/>
<evidence type="ECO:0000255" key="2">
    <source>
        <dbReference type="HAMAP-Rule" id="MF_00103"/>
    </source>
</evidence>
<evidence type="ECO:0000305" key="3"/>
<sequence>MPELPEVETTLRGLSPHLVGQRIHGVILRRPDLRWPIPEQIERLLPGATITNVRRRAKYLLIDTDAGGSALLHLGMSGSLRVLPGDTLPRAHDHVDISLQNGRVLRFNDPRRFGCLLWQSGTQTHELLAALGPEPLSDAFTGDYLHALAQGRRAAVKTFLMDQAVVVGVGNIYAAESLHRAGISPLREAGKVSLARYRRLADAVKDILAYAIQRGGTTLRDFISPDGAPGYFEQELSVYGREGEACKQCGRVLKHATIGQRATVWCGSCQR</sequence>